<dbReference type="EC" id="6.1.1.4" evidence="1"/>
<dbReference type="EMBL" id="AP008230">
    <property type="protein sequence ID" value="BAE84947.1"/>
    <property type="molecule type" value="Genomic_DNA"/>
</dbReference>
<dbReference type="RefSeq" id="WP_011460890.1">
    <property type="nucleotide sequence ID" value="NC_007907.1"/>
</dbReference>
<dbReference type="SMR" id="Q24SP5"/>
<dbReference type="STRING" id="138119.DSY3158"/>
<dbReference type="KEGG" id="dsy:DSY3158"/>
<dbReference type="eggNOG" id="COG0495">
    <property type="taxonomic scope" value="Bacteria"/>
</dbReference>
<dbReference type="HOGENOM" id="CLU_004427_0_0_9"/>
<dbReference type="Proteomes" id="UP000001946">
    <property type="component" value="Chromosome"/>
</dbReference>
<dbReference type="GO" id="GO:0005829">
    <property type="term" value="C:cytosol"/>
    <property type="evidence" value="ECO:0007669"/>
    <property type="project" value="TreeGrafter"/>
</dbReference>
<dbReference type="GO" id="GO:0002161">
    <property type="term" value="F:aminoacyl-tRNA deacylase activity"/>
    <property type="evidence" value="ECO:0007669"/>
    <property type="project" value="InterPro"/>
</dbReference>
<dbReference type="GO" id="GO:0005524">
    <property type="term" value="F:ATP binding"/>
    <property type="evidence" value="ECO:0007669"/>
    <property type="project" value="UniProtKB-UniRule"/>
</dbReference>
<dbReference type="GO" id="GO:0004823">
    <property type="term" value="F:leucine-tRNA ligase activity"/>
    <property type="evidence" value="ECO:0007669"/>
    <property type="project" value="UniProtKB-UniRule"/>
</dbReference>
<dbReference type="GO" id="GO:0006429">
    <property type="term" value="P:leucyl-tRNA aminoacylation"/>
    <property type="evidence" value="ECO:0007669"/>
    <property type="project" value="UniProtKB-UniRule"/>
</dbReference>
<dbReference type="CDD" id="cd07958">
    <property type="entry name" value="Anticodon_Ia_Leu_BEm"/>
    <property type="match status" value="1"/>
</dbReference>
<dbReference type="CDD" id="cd00812">
    <property type="entry name" value="LeuRS_core"/>
    <property type="match status" value="1"/>
</dbReference>
<dbReference type="FunFam" id="3.40.50.620:FF:000003">
    <property type="entry name" value="Leucine--tRNA ligase"/>
    <property type="match status" value="1"/>
</dbReference>
<dbReference type="FunFam" id="3.40.50.620:FF:000056">
    <property type="entry name" value="Leucine--tRNA ligase"/>
    <property type="match status" value="1"/>
</dbReference>
<dbReference type="FunFam" id="1.10.730.10:FF:000011">
    <property type="entry name" value="Leucine--tRNA ligase chloroplastic/mitochondrial"/>
    <property type="match status" value="1"/>
</dbReference>
<dbReference type="Gene3D" id="3.10.20.590">
    <property type="match status" value="1"/>
</dbReference>
<dbReference type="Gene3D" id="3.40.50.620">
    <property type="entry name" value="HUPs"/>
    <property type="match status" value="2"/>
</dbReference>
<dbReference type="Gene3D" id="1.10.730.10">
    <property type="entry name" value="Isoleucyl-tRNA Synthetase, Domain 1"/>
    <property type="match status" value="2"/>
</dbReference>
<dbReference type="HAMAP" id="MF_00049_B">
    <property type="entry name" value="Leu_tRNA_synth_B"/>
    <property type="match status" value="1"/>
</dbReference>
<dbReference type="InterPro" id="IPR001412">
    <property type="entry name" value="aa-tRNA-synth_I_CS"/>
</dbReference>
<dbReference type="InterPro" id="IPR002300">
    <property type="entry name" value="aa-tRNA-synth_Ia"/>
</dbReference>
<dbReference type="InterPro" id="IPR002302">
    <property type="entry name" value="Leu-tRNA-ligase"/>
</dbReference>
<dbReference type="InterPro" id="IPR025709">
    <property type="entry name" value="Leu_tRNA-synth_edit"/>
</dbReference>
<dbReference type="InterPro" id="IPR013155">
    <property type="entry name" value="M/V/L/I-tRNA-synth_anticd-bd"/>
</dbReference>
<dbReference type="InterPro" id="IPR015413">
    <property type="entry name" value="Methionyl/Leucyl_tRNA_Synth"/>
</dbReference>
<dbReference type="InterPro" id="IPR014729">
    <property type="entry name" value="Rossmann-like_a/b/a_fold"/>
</dbReference>
<dbReference type="InterPro" id="IPR009080">
    <property type="entry name" value="tRNAsynth_Ia_anticodon-bd"/>
</dbReference>
<dbReference type="InterPro" id="IPR009008">
    <property type="entry name" value="Val/Leu/Ile-tRNA-synth_edit"/>
</dbReference>
<dbReference type="NCBIfam" id="TIGR00396">
    <property type="entry name" value="leuS_bact"/>
    <property type="match status" value="1"/>
</dbReference>
<dbReference type="PANTHER" id="PTHR43740:SF2">
    <property type="entry name" value="LEUCINE--TRNA LIGASE, MITOCHONDRIAL"/>
    <property type="match status" value="1"/>
</dbReference>
<dbReference type="PANTHER" id="PTHR43740">
    <property type="entry name" value="LEUCYL-TRNA SYNTHETASE"/>
    <property type="match status" value="1"/>
</dbReference>
<dbReference type="Pfam" id="PF08264">
    <property type="entry name" value="Anticodon_1"/>
    <property type="match status" value="1"/>
</dbReference>
<dbReference type="Pfam" id="PF00133">
    <property type="entry name" value="tRNA-synt_1"/>
    <property type="match status" value="1"/>
</dbReference>
<dbReference type="Pfam" id="PF13603">
    <property type="entry name" value="tRNA-synt_1_2"/>
    <property type="match status" value="1"/>
</dbReference>
<dbReference type="Pfam" id="PF09334">
    <property type="entry name" value="tRNA-synt_1g"/>
    <property type="match status" value="1"/>
</dbReference>
<dbReference type="PRINTS" id="PR00985">
    <property type="entry name" value="TRNASYNTHLEU"/>
</dbReference>
<dbReference type="SUPFAM" id="SSF47323">
    <property type="entry name" value="Anticodon-binding domain of a subclass of class I aminoacyl-tRNA synthetases"/>
    <property type="match status" value="1"/>
</dbReference>
<dbReference type="SUPFAM" id="SSF52374">
    <property type="entry name" value="Nucleotidylyl transferase"/>
    <property type="match status" value="1"/>
</dbReference>
<dbReference type="SUPFAM" id="SSF50677">
    <property type="entry name" value="ValRS/IleRS/LeuRS editing domain"/>
    <property type="match status" value="1"/>
</dbReference>
<dbReference type="PROSITE" id="PS00178">
    <property type="entry name" value="AA_TRNA_LIGASE_I"/>
    <property type="match status" value="1"/>
</dbReference>
<proteinExistence type="inferred from homology"/>
<feature type="chain" id="PRO_0000334749" description="Leucine--tRNA ligase">
    <location>
        <begin position="1"/>
        <end position="827"/>
    </location>
</feature>
<feature type="short sequence motif" description="'HIGH' region">
    <location>
        <begin position="42"/>
        <end position="52"/>
    </location>
</feature>
<feature type="short sequence motif" description="'KMSKS' region">
    <location>
        <begin position="583"/>
        <end position="587"/>
    </location>
</feature>
<feature type="binding site" evidence="1">
    <location>
        <position position="586"/>
    </location>
    <ligand>
        <name>ATP</name>
        <dbReference type="ChEBI" id="CHEBI:30616"/>
    </ligand>
</feature>
<evidence type="ECO:0000255" key="1">
    <source>
        <dbReference type="HAMAP-Rule" id="MF_00049"/>
    </source>
</evidence>
<comment type="catalytic activity">
    <reaction evidence="1">
        <text>tRNA(Leu) + L-leucine + ATP = L-leucyl-tRNA(Leu) + AMP + diphosphate</text>
        <dbReference type="Rhea" id="RHEA:11688"/>
        <dbReference type="Rhea" id="RHEA-COMP:9613"/>
        <dbReference type="Rhea" id="RHEA-COMP:9622"/>
        <dbReference type="ChEBI" id="CHEBI:30616"/>
        <dbReference type="ChEBI" id="CHEBI:33019"/>
        <dbReference type="ChEBI" id="CHEBI:57427"/>
        <dbReference type="ChEBI" id="CHEBI:78442"/>
        <dbReference type="ChEBI" id="CHEBI:78494"/>
        <dbReference type="ChEBI" id="CHEBI:456215"/>
        <dbReference type="EC" id="6.1.1.4"/>
    </reaction>
</comment>
<comment type="subcellular location">
    <subcellularLocation>
        <location evidence="1">Cytoplasm</location>
    </subcellularLocation>
</comment>
<comment type="similarity">
    <text evidence="1">Belongs to the class-I aminoacyl-tRNA synthetase family.</text>
</comment>
<sequence length="827" mass="94532">MQEKYLFSEIEPKWQKKWVDRKDYQAEEHSDKPKFYALAMFPYPSGNLHMGHVRNYSIVDVIARFKRMRGYNVLHPIGWDSFGLPAENAAIKNQTPPAEWTWKNIANMKRQLQEMGISYDWEREVTTCHPDYYKFTQWIFLEFYKHGLVYKKKAGVNWCPSCATVLANEQVVDGACERCDTAVTKKDLEQWFFKITDYAQVLLDDLEKLPGWPDKVKTMQKNWIGRSEGAEVEFDLENHGDKIRVYTTRVDTIFGVSYVVLAPEHPLVQKLIAGTEYENDVQAFIERMKGLNEIARTSTETEKEGLFTGAYCINPYSGEKVPIWIANYVLFEYGTGAVMGVPAHDERDFEFAGKYKLPIKTVILPEGTPVEEKDTPLQAAFVEEGMMVNSGEYDGLKNVEAWEKMCDKAEHDGFGERKVNFRLRDWLISRQRYWGAPIPMIYCDHCGIVPVPQDQLPVMLPDDVVFKAGENPLTTSESFKQTICPTCGGKARRETDTMDTFMCSSWYFLRYTDPHNAQLPFAKEAADHWMNVDQYVGGVEHAILHLLYSRFFTKALRDFGYLKVDEPFANLLTQGMVCLGGAKMSKSKGNVVSPEEIISKYGADTARLFILFAAPPERDLEWNDQGVEGCYRFLNRVWRLAAQYEEVLKTTGAGANEFGELDKAAKDMRRQTHQTIQRVTSDVGARFNFNTAVSAIMELVNALYLYKEQPQVNLAVAREALESILILLAPFAPHITEEIWSELGHEDSIHSREWPQVDEEALVQEEVTVVLQINGKVKERIQVPAQISAAELEAQVRQLPRLGEWTQGKQILKIVTVPGKLVNVVVK</sequence>
<gene>
    <name evidence="1" type="primary">leuS</name>
    <name type="ordered locus">DSY3158</name>
</gene>
<name>SYL_DESHY</name>
<organism>
    <name type="scientific">Desulfitobacterium hafniense (strain Y51)</name>
    <dbReference type="NCBI Taxonomy" id="138119"/>
    <lineage>
        <taxon>Bacteria</taxon>
        <taxon>Bacillati</taxon>
        <taxon>Bacillota</taxon>
        <taxon>Clostridia</taxon>
        <taxon>Eubacteriales</taxon>
        <taxon>Desulfitobacteriaceae</taxon>
        <taxon>Desulfitobacterium</taxon>
    </lineage>
</organism>
<reference key="1">
    <citation type="journal article" date="2006" name="J. Bacteriol.">
        <title>Complete genome sequence of the dehalorespiring bacterium Desulfitobacterium hafniense Y51 and comparison with Dehalococcoides ethenogenes 195.</title>
        <authorList>
            <person name="Nonaka H."/>
            <person name="Keresztes G."/>
            <person name="Shinoda Y."/>
            <person name="Ikenaga Y."/>
            <person name="Abe M."/>
            <person name="Naito K."/>
            <person name="Inatomi K."/>
            <person name="Furukawa K."/>
            <person name="Inui M."/>
            <person name="Yukawa H."/>
        </authorList>
    </citation>
    <scope>NUCLEOTIDE SEQUENCE [LARGE SCALE GENOMIC DNA]</scope>
    <source>
        <strain>Y51</strain>
    </source>
</reference>
<accession>Q24SP5</accession>
<keyword id="KW-0030">Aminoacyl-tRNA synthetase</keyword>
<keyword id="KW-0067">ATP-binding</keyword>
<keyword id="KW-0963">Cytoplasm</keyword>
<keyword id="KW-0436">Ligase</keyword>
<keyword id="KW-0547">Nucleotide-binding</keyword>
<keyword id="KW-0648">Protein biosynthesis</keyword>
<keyword id="KW-1185">Reference proteome</keyword>
<protein>
    <recommendedName>
        <fullName evidence="1">Leucine--tRNA ligase</fullName>
        <ecNumber evidence="1">6.1.1.4</ecNumber>
    </recommendedName>
    <alternativeName>
        <fullName evidence="1">Leucyl-tRNA synthetase</fullName>
        <shortName evidence="1">LeuRS</shortName>
    </alternativeName>
</protein>